<sequence>MMFPAVAAPPRRLPGERLQRSQNPVETSWLSFRILATRGPCVTSTFLFLTVAFLGLSWVSVAVAAHAEHPEDSATNFLFSFAENSLANREPPEDSAARPSSRSGGAERRRLDSLIPGFLKRRRIFKQLRPVDEFQLREFQEASSKVKAQFFSAGHSKVTFVDRPSAALLSFLHLEEEDVPYGVVIKAIPYDAFDFYESVAEPYIHRMFDDPRKFPYVVPVLAALRSTSKRVLYLVLPLYRELPETVDEEARSLDFVLLLAEMAMAVCQLHERNLAHRDLKEDNFLVSPEGHIVVSDLATLDITDNKSFLIGTSGYMPPETRSSYLLRKGYKRSRYGEKTDVYSLGVAFRHLAFMLEGLGVQVPHRTQLAKLIKKMTSPDPEKRPLIGEVMEDPFFASVDFRLVRQRAGKHPFKKLPGADLLAERQRARLEAREKADAAAKAADNAEVPAAKSPAGKTGGAGTLSGDRDRAGSGEKPAERAEEEKGRGRGAQTHEGNHDRTDDAGREELREGPGDQKPSGEENREGGQPPGQREEQREGTGLEEGFNKEDAQES</sequence>
<accession>A0A7J6K7I9</accession>
<evidence type="ECO:0000250" key="1">
    <source>
        <dbReference type="UniProtKB" id="A0A7J6K7Y0"/>
    </source>
</evidence>
<evidence type="ECO:0000255" key="2">
    <source>
        <dbReference type="PROSITE-ProRule" id="PRU00159"/>
    </source>
</evidence>
<evidence type="ECO:0000256" key="3">
    <source>
        <dbReference type="SAM" id="MobiDB-lite"/>
    </source>
</evidence>
<evidence type="ECO:0000269" key="4">
    <source>
    </source>
</evidence>
<evidence type="ECO:0000269" key="5">
    <source>
    </source>
</evidence>
<evidence type="ECO:0000269" key="6">
    <source>
    </source>
</evidence>
<evidence type="ECO:0000303" key="7">
    <source>
    </source>
</evidence>
<evidence type="ECO:0000303" key="8">
    <source>
    </source>
</evidence>
<evidence type="ECO:0000303" key="9">
    <source>
    </source>
</evidence>
<evidence type="ECO:0000305" key="10"/>
<evidence type="ECO:0000305" key="11">
    <source>
    </source>
</evidence>
<evidence type="ECO:0000312" key="12">
    <source>
        <dbReference type="EMBL" id="KAF4643433.1"/>
    </source>
</evidence>
<reference key="1">
    <citation type="submission" date="2020-03" db="EMBL/GenBank/DDBJ databases">
        <title>Genome sequence of Toxoplasma gondii RH-88 strain.</title>
        <authorList>
            <person name="Lorenzi H.A."/>
            <person name="Venepally P."/>
            <person name="Rozenberg A."/>
            <person name="Sibley D."/>
        </authorList>
    </citation>
    <scope>NUCLEOTIDE SEQUENCE [LARGE SCALE GENOMIC DNA]</scope>
    <source>
        <strain>RH-88</strain>
    </source>
</reference>
<reference evidence="10" key="2">
    <citation type="journal article" date="2017" name="Front. Microbiol.">
        <title>Functional Characterization of Rhoptry Kinome in the Virulent Toxoplasma gondii RH Strain.</title>
        <authorList>
            <person name="Wang J.L."/>
            <person name="Li T.T."/>
            <person name="Elsheikha H.M."/>
            <person name="Chen K."/>
            <person name="Zhu W.N."/>
            <person name="Yue D.M."/>
            <person name="Zhu X.Q."/>
            <person name="Huang S.Y."/>
        </authorList>
    </citation>
    <scope>DISRUPTION PHENOTYPE</scope>
    <source>
        <strain evidence="4">RH</strain>
    </source>
</reference>
<reference evidence="10" key="3">
    <citation type="journal article" date="2018" name="MBio">
        <title>Aspartyl Protease 5 Matures Dense Granule Proteins That Reside at the Host-Parasite Interface in Toxoplasma gondii.</title>
        <authorList>
            <person name="Coffey M.J."/>
            <person name="Dagley L.F."/>
            <person name="Seizova S."/>
            <person name="Kapp E.A."/>
            <person name="Infusini G."/>
            <person name="Roos D.S."/>
            <person name="Boddey J.A."/>
            <person name="Webb A.I."/>
            <person name="Tonkin C.J."/>
        </authorList>
    </citation>
    <scope>IDENTIFICATION BY MASS SPECTROMETRY</scope>
    <scope>PROTEOLYTIC CLEAVAGE</scope>
    <scope>MUTAGENESIS OF ARG-109</scope>
    <source>
        <strain evidence="5">Prugniaud</strain>
    </source>
</reference>
<reference evidence="10" key="4">
    <citation type="journal article" date="2019" name="Proc. Natl. Acad. Sci. U.S.A.">
        <title>Divergent kinase regulates membrane ultrastructure of the Toxoplasma parasitophorous vacuole.</title>
        <authorList>
            <person name="Beraki T."/>
            <person name="Hu X."/>
            <person name="Broncel M."/>
            <person name="Young J.C."/>
            <person name="O'Shaughnessy W.J."/>
            <person name="Borek D."/>
            <person name="Treeck M."/>
            <person name="Reese M.L."/>
        </authorList>
    </citation>
    <scope>SUBCELLULAR LOCATION</scope>
    <scope>DEVELOPMENTAL STAGE</scope>
    <scope>DOMAIN</scope>
    <source>
        <strain evidence="6">RH</strain>
    </source>
</reference>
<comment type="function">
    <text evidence="10">Probable serine/threonine-protein kinase.</text>
</comment>
<comment type="catalytic activity">
    <reaction evidence="1">
        <text>L-seryl-[protein] + ATP = O-phospho-L-seryl-[protein] + ADP + H(+)</text>
        <dbReference type="Rhea" id="RHEA:17989"/>
        <dbReference type="Rhea" id="RHEA-COMP:9863"/>
        <dbReference type="Rhea" id="RHEA-COMP:11604"/>
        <dbReference type="ChEBI" id="CHEBI:15378"/>
        <dbReference type="ChEBI" id="CHEBI:29999"/>
        <dbReference type="ChEBI" id="CHEBI:30616"/>
        <dbReference type="ChEBI" id="CHEBI:83421"/>
        <dbReference type="ChEBI" id="CHEBI:456216"/>
        <dbReference type="EC" id="2.7.11.1"/>
    </reaction>
</comment>
<comment type="catalytic activity">
    <reaction evidence="1">
        <text>L-threonyl-[protein] + ATP = O-phospho-L-threonyl-[protein] + ADP + H(+)</text>
        <dbReference type="Rhea" id="RHEA:46608"/>
        <dbReference type="Rhea" id="RHEA-COMP:11060"/>
        <dbReference type="Rhea" id="RHEA-COMP:11605"/>
        <dbReference type="ChEBI" id="CHEBI:15378"/>
        <dbReference type="ChEBI" id="CHEBI:30013"/>
        <dbReference type="ChEBI" id="CHEBI:30616"/>
        <dbReference type="ChEBI" id="CHEBI:61977"/>
        <dbReference type="ChEBI" id="CHEBI:456216"/>
        <dbReference type="EC" id="2.7.11.1"/>
    </reaction>
</comment>
<comment type="cofactor">
    <cofactor evidence="1">
        <name>Mg(2+)</name>
        <dbReference type="ChEBI" id="CHEBI:18420"/>
    </cofactor>
</comment>
<comment type="subcellular location">
    <subcellularLocation>
        <location evidence="6">Cytoplasmic granule</location>
    </subcellularLocation>
    <subcellularLocation>
        <location evidence="6">Secreted</location>
    </subcellularLocation>
    <subcellularLocation>
        <location evidence="6">Parasitophorous vacuole lumen</location>
    </subcellularLocation>
    <text evidence="6">In tachyzoites, localizes to dense granules.</text>
</comment>
<comment type="developmental stage">
    <text evidence="6">Expressed in tachyzoites (at protein level).</text>
</comment>
<comment type="domain">
    <text evidence="11">The protein kinase domain has an atypical kinase fold which lacks the glycine-rich loop that is critical for ATP binding in canonical protein kinase domains.</text>
</comment>
<comment type="disruption phenotype">
    <text evidence="4">In BALB/c mice infected with knockout tachyzoites (type I strain RH), virulence is not affected.</text>
</comment>
<comment type="similarity">
    <text evidence="10">Belongs to the protein kinase superfamily. STE Ser/Thr protein kinase family. WNG subfamily.</text>
</comment>
<gene>
    <name evidence="7" type="primary">ROP34</name>
    <name evidence="8" type="synonym">WNG2</name>
    <name evidence="12" type="ORF">TGRH88_030990</name>
</gene>
<name>WNG2_TOXGO</name>
<dbReference type="EC" id="2.7.11.1" evidence="1"/>
<dbReference type="EMBL" id="JAAUHK010000192">
    <property type="protein sequence ID" value="KAF4643433.1"/>
    <property type="molecule type" value="Genomic_DNA"/>
</dbReference>
<dbReference type="SMR" id="A0A7J6K7I9"/>
<dbReference type="VEuPathDB" id="ToxoDB:TGME49_240090"/>
<dbReference type="Proteomes" id="UP000557509">
    <property type="component" value="Unassembled WGS sequence"/>
</dbReference>
<dbReference type="GO" id="GO:0005576">
    <property type="term" value="C:extracellular region"/>
    <property type="evidence" value="ECO:0007669"/>
    <property type="project" value="UniProtKB-SubCell"/>
</dbReference>
<dbReference type="GO" id="GO:0005524">
    <property type="term" value="F:ATP binding"/>
    <property type="evidence" value="ECO:0007669"/>
    <property type="project" value="UniProtKB-KW"/>
</dbReference>
<dbReference type="GO" id="GO:0046872">
    <property type="term" value="F:metal ion binding"/>
    <property type="evidence" value="ECO:0007669"/>
    <property type="project" value="UniProtKB-KW"/>
</dbReference>
<dbReference type="GO" id="GO:0004674">
    <property type="term" value="F:protein serine/threonine kinase activity"/>
    <property type="evidence" value="ECO:0007669"/>
    <property type="project" value="TreeGrafter"/>
</dbReference>
<dbReference type="CDD" id="cd00180">
    <property type="entry name" value="PKc"/>
    <property type="match status" value="1"/>
</dbReference>
<dbReference type="Gene3D" id="1.10.510.10">
    <property type="entry name" value="Transferase(Phosphotransferase) domain 1"/>
    <property type="match status" value="1"/>
</dbReference>
<dbReference type="InterPro" id="IPR011009">
    <property type="entry name" value="Kinase-like_dom_sf"/>
</dbReference>
<dbReference type="InterPro" id="IPR050660">
    <property type="entry name" value="NEK_Ser/Thr_kinase"/>
</dbReference>
<dbReference type="InterPro" id="IPR000719">
    <property type="entry name" value="Prot_kinase_dom"/>
</dbReference>
<dbReference type="InterPro" id="IPR008271">
    <property type="entry name" value="Ser/Thr_kinase_AS"/>
</dbReference>
<dbReference type="PANTHER" id="PTHR43671">
    <property type="entry name" value="SERINE/THREONINE-PROTEIN KINASE NEK"/>
    <property type="match status" value="1"/>
</dbReference>
<dbReference type="PANTHER" id="PTHR43671:SF13">
    <property type="entry name" value="SERINE_THREONINE-PROTEIN KINASE NEK2"/>
    <property type="match status" value="1"/>
</dbReference>
<dbReference type="Pfam" id="PF00069">
    <property type="entry name" value="Pkinase"/>
    <property type="match status" value="1"/>
</dbReference>
<dbReference type="SMART" id="SM00220">
    <property type="entry name" value="S_TKc"/>
    <property type="match status" value="1"/>
</dbReference>
<dbReference type="SUPFAM" id="SSF56112">
    <property type="entry name" value="Protein kinase-like (PK-like)"/>
    <property type="match status" value="1"/>
</dbReference>
<dbReference type="PROSITE" id="PS50011">
    <property type="entry name" value="PROTEIN_KINASE_DOM"/>
    <property type="match status" value="1"/>
</dbReference>
<dbReference type="PROSITE" id="PS00108">
    <property type="entry name" value="PROTEIN_KINASE_ST"/>
    <property type="match status" value="1"/>
</dbReference>
<feature type="signal peptide" evidence="5">
    <location>
        <begin position="1"/>
        <end position="64"/>
    </location>
</feature>
<feature type="chain" id="PRO_0000456805" description="Serine/threonine-protein kinase WNG2">
    <location>
        <begin position="65"/>
        <end position="553"/>
    </location>
</feature>
<feature type="domain" description="Protein kinase" evidence="2">
    <location>
        <begin position="125"/>
        <end position="395"/>
    </location>
</feature>
<feature type="region of interest" description="Disordered" evidence="3">
    <location>
        <begin position="1"/>
        <end position="20"/>
    </location>
</feature>
<feature type="region of interest" description="Disordered" evidence="3">
    <location>
        <begin position="88"/>
        <end position="107"/>
    </location>
</feature>
<feature type="region of interest" description="Disordered" evidence="3">
    <location>
        <begin position="432"/>
        <end position="553"/>
    </location>
</feature>
<feature type="compositionally biased region" description="Low complexity" evidence="3">
    <location>
        <begin position="438"/>
        <end position="451"/>
    </location>
</feature>
<feature type="compositionally biased region" description="Basic and acidic residues" evidence="3">
    <location>
        <begin position="465"/>
        <end position="486"/>
    </location>
</feature>
<feature type="compositionally biased region" description="Basic and acidic residues" evidence="3">
    <location>
        <begin position="494"/>
        <end position="524"/>
    </location>
</feature>
<feature type="compositionally biased region" description="Basic and acidic residues" evidence="3">
    <location>
        <begin position="531"/>
        <end position="553"/>
    </location>
</feature>
<feature type="active site" description="Proton acceptor" evidence="2">
    <location>
        <position position="278"/>
    </location>
</feature>
<feature type="binding site" evidence="2">
    <location>
        <position position="186"/>
    </location>
    <ligand>
        <name>ATP</name>
        <dbReference type="ChEBI" id="CHEBI:30616"/>
    </ligand>
</feature>
<feature type="site" description="Cleavage; by ASP5" evidence="5">
    <location>
        <begin position="111"/>
        <end position="112"/>
    </location>
</feature>
<feature type="mutagenesis site" description="Loss of proteolytic cleavage by ASP5." evidence="5">
    <original>R</original>
    <variation>A</variation>
    <location>
        <position position="109"/>
    </location>
</feature>
<proteinExistence type="evidence at protein level"/>
<organism>
    <name type="scientific">Toxoplasma gondii</name>
    <dbReference type="NCBI Taxonomy" id="5811"/>
    <lineage>
        <taxon>Eukaryota</taxon>
        <taxon>Sar</taxon>
        <taxon>Alveolata</taxon>
        <taxon>Apicomplexa</taxon>
        <taxon>Conoidasida</taxon>
        <taxon>Coccidia</taxon>
        <taxon>Eucoccidiorida</taxon>
        <taxon>Eimeriorina</taxon>
        <taxon>Sarcocystidae</taxon>
        <taxon>Toxoplasma</taxon>
    </lineage>
</organism>
<protein>
    <recommendedName>
        <fullName evidence="10">Serine/threonine-protein kinase WNG2</fullName>
        <ecNumber evidence="1">2.7.11.1</ecNumber>
    </recommendedName>
    <alternativeName>
        <fullName evidence="7">Rhoptry kinase family protein ROP34</fullName>
    </alternativeName>
    <alternativeName>
        <fullName evidence="9">With-No-Gly-loop kinase 2</fullName>
    </alternativeName>
</protein>
<keyword id="KW-0067">ATP-binding</keyword>
<keyword id="KW-0418">Kinase</keyword>
<keyword id="KW-0460">Magnesium</keyword>
<keyword id="KW-0479">Metal-binding</keyword>
<keyword id="KW-0547">Nucleotide-binding</keyword>
<keyword id="KW-1185">Reference proteome</keyword>
<keyword id="KW-0964">Secreted</keyword>
<keyword id="KW-0732">Signal</keyword>
<keyword id="KW-0808">Transferase</keyword>